<sequence>VPGGLXPPPEYVGPKLVNDADHPWEPLRPGDIRGPCPGLNTLASHGYLPRNGVATPAQIINAIVEGFNFNYEGAVFVTYFAHIVDGNLVTDLLSIGGKTNLTGEDTGAPAIIGGLNTHSVFEGDASMTRDDFHFGDNHSFNQTLFDQFVEYSNTYGGGFYNQEVAGHLRRRRIEQSIATNPEFDFTSPRFFTAFAESSFPYSFFVDGRITERPGGLSMENATLFFRDHKMPDDFWRNVNGEMTFTGTPDPNSAPSNLALGH</sequence>
<name>APO1_COPRA</name>
<gene>
    <name evidence="7" type="primary">APO</name>
</gene>
<keyword id="KW-0903">Direct protein sequencing</keyword>
<keyword id="KW-0325">Glycoprotein</keyword>
<keyword id="KW-0349">Heme</keyword>
<keyword id="KW-0376">Hydrogen peroxide</keyword>
<keyword id="KW-0408">Iron</keyword>
<keyword id="KW-0479">Metal-binding</keyword>
<keyword id="KW-0560">Oxidoreductase</keyword>
<keyword id="KW-0575">Peroxidase</keyword>
<feature type="chain" id="PRO_0000391457" description="Aromatic peroxygenase">
    <location>
        <begin position="1" status="less than"/>
        <end position="261" status="greater than"/>
    </location>
</feature>
<feature type="binding site" description="axial binding residue" evidence="1">
    <location>
        <position position="36"/>
    </location>
    <ligand>
        <name>heme</name>
        <dbReference type="ChEBI" id="CHEBI:30413"/>
    </ligand>
    <ligandPart>
        <name>Fe</name>
        <dbReference type="ChEBI" id="CHEBI:18248"/>
    </ligandPart>
</feature>
<feature type="glycosylation site" description="N-linked (GlcNAc...) asparagine" evidence="2">
    <location>
        <position position="100"/>
    </location>
</feature>
<feature type="glycosylation site" description="N-linked (GlcNAc...) asparagine" evidence="2">
    <location>
        <position position="137"/>
    </location>
</feature>
<feature type="glycosylation site" description="N-linked (GlcNAc...) asparagine" evidence="2">
    <location>
        <position position="141"/>
    </location>
</feature>
<feature type="glycosylation site" description="N-linked (GlcNAc...) asparagine" evidence="2">
    <location>
        <position position="220"/>
    </location>
</feature>
<feature type="sequence conflict" description="In Ref. 1; AA sequence." evidence="6" ref="1">
    <original>PKL</original>
    <variation>GKK</variation>
    <location>
        <begin position="14"/>
        <end position="16"/>
    </location>
</feature>
<feature type="non-consecutive residues" evidence="5">
    <location>
        <begin position="236"/>
        <end position="237"/>
    </location>
</feature>
<feature type="non-consecutive residues" evidence="5">
    <location>
        <begin position="251"/>
        <end position="252"/>
    </location>
</feature>
<feature type="non-terminal residue" evidence="5">
    <location>
        <position position="1"/>
    </location>
</feature>
<feature type="non-terminal residue" evidence="5">
    <location>
        <position position="261"/>
    </location>
</feature>
<reference evidence="6" key="1">
    <citation type="journal article" date="2007" name="Appl. Environ. Microbiol.">
        <title>The coprophilous mushroom Coprinus radians secretes a haloperoxidase that catalyzes aromatic peroxygenation.</title>
        <authorList>
            <person name="Anh D.H."/>
            <person name="Ullrich R."/>
            <person name="Benndorf D."/>
            <person name="Svatos A."/>
            <person name="Muck A."/>
            <person name="Hofrichter M."/>
        </authorList>
    </citation>
    <scope>PROTEIN SEQUENCE OF 1-16 AND 237-261</scope>
    <scope>FUNCTION</scope>
    <scope>COFACTOR</scope>
    <scope>BIOPHYSICOCHEMICAL PROPERTIES</scope>
    <scope>GLYCOSYLATION</scope>
    <source>
        <strain>ATCC 20014 / DSM 888 / 1020</strain>
    </source>
</reference>
<reference evidence="7" key="2">
    <citation type="journal article" date="2009" name="Appl. Microbiol. Biotechnol.">
        <title>Molecular characterization of aromatic peroxygenase from Agrocybe aegerita.</title>
        <authorList>
            <person name="Pecyna M.J."/>
            <person name="Ullrich R."/>
            <person name="Bittner B."/>
            <person name="Clemens A."/>
            <person name="Scheibner K."/>
            <person name="Schubert R."/>
            <person name="Hofrichter M."/>
        </authorList>
    </citation>
    <scope>NUCLEOTIDE SEQUENCE [MRNA] OF 7-235</scope>
    <scope>PROTEIN SEQUENCE OF 227-236</scope>
    <source>
        <strain>ATCC 20014 / DSM 888 / 1020</strain>
    </source>
</reference>
<reference evidence="6" key="3">
    <citation type="journal article" date="2009" name="Appl. Microbiol. Biotechnol.">
        <title>Conversion of dibenzothiophene by the mushrooms Agrocybe aegerita and Coprinellus radians and their extracellular peroxygenases.</title>
        <authorList>
            <person name="Aranda E."/>
            <person name="Kinne M."/>
            <person name="Kluge M."/>
            <person name="Ullrich R."/>
            <person name="Hofrichter M."/>
        </authorList>
    </citation>
    <scope>FUNCTION</scope>
</reference>
<comment type="function">
    <text evidence="3 4">Aromatic peroxidase that oxidizes aryl alcohols into the corresponding aldehydes and then into the corresponding benzoic acids. Catalyzes the regioselective peroxide-dependent hydroxylation of naphthalene to 1-naphthol and to a far lesser extent 2-naphthol via a naphthalene 1,2-oxide intermediate. Halogenates phenol to 2-bromophenol and 4-bromophenol. Oxidizes the sulfur-containing heterocycle dibenzothiophene to yield sulfoxidation products, and trace amounts of ring-hydroxylation products.</text>
</comment>
<comment type="cofactor">
    <cofactor evidence="3">
        <name>heme b</name>
        <dbReference type="ChEBI" id="CHEBI:60344"/>
    </cofactor>
    <text evidence="3">Binds 1 heme b (iron(II)-protoporphyrin IX) group.</text>
</comment>
<comment type="biophysicochemical properties">
    <kinetics>
        <KM evidence="3">49 uM for ABTS (at pH 4.5)</KM>
        <KM evidence="3">635 uM for benzyl alcohol (at pH 7)</KM>
        <KM evidence="3">342 uM for dimethoxyphenol (at pH 4.5)</KM>
        <KM evidence="3">1201 uM for hydrogen peroxide (at pH 7)</KM>
        <KM evidence="3">584 uM for naphthalene (at pH 7)</KM>
        <KM evidence="3">88 uM for veratryl alcohol (at pH 7)</KM>
    </kinetics>
    <phDependence>
        <text evidence="3">Optimum pH is 5.0 with ABTS as substrate. Optimum pH is 6.0 with dimethoxyphenol as substrate. Optimum pH is 8.0 with benzyl alcohol as substrate, and there is another optimum at pH 4.5. Optimum pH is 6.0 with naphthalene as substrate. Optimum pH is 7.0 with pyridine as substrate. Optimum pH is 7.5 with veratryl alcohol as substrate, and there is another optimum at pH 4.5.</text>
    </phDependence>
</comment>
<comment type="PTM">
    <text evidence="3">N-glycosylated.</text>
</comment>
<comment type="similarity">
    <text evidence="2">Belongs to the chloroperoxidase family.</text>
</comment>
<accession>B9W4V8</accession>
<dbReference type="EMBL" id="FM872459">
    <property type="protein sequence ID" value="CAS12255.1"/>
    <property type="molecule type" value="mRNA"/>
</dbReference>
<dbReference type="GlyCosmos" id="B9W4V8">
    <property type="glycosylation" value="4 sites, No reported glycans"/>
</dbReference>
<dbReference type="SABIO-RK" id="B9W4V8"/>
<dbReference type="GO" id="GO:0020037">
    <property type="term" value="F:heme binding"/>
    <property type="evidence" value="ECO:0000314"/>
    <property type="project" value="UniProtKB"/>
</dbReference>
<dbReference type="GO" id="GO:0046872">
    <property type="term" value="F:metal ion binding"/>
    <property type="evidence" value="ECO:0007669"/>
    <property type="project" value="UniProtKB-KW"/>
</dbReference>
<dbReference type="GO" id="GO:0004601">
    <property type="term" value="F:peroxidase activity"/>
    <property type="evidence" value="ECO:0000314"/>
    <property type="project" value="UniProtKB"/>
</dbReference>
<dbReference type="GO" id="GO:0042744">
    <property type="term" value="P:hydrogen peroxide catabolic process"/>
    <property type="evidence" value="ECO:0007669"/>
    <property type="project" value="UniProtKB-KW"/>
</dbReference>
<dbReference type="Gene3D" id="1.10.489.10">
    <property type="entry name" value="Chloroperoxidase-like"/>
    <property type="match status" value="1"/>
</dbReference>
<dbReference type="InterPro" id="IPR000028">
    <property type="entry name" value="Chloroperoxidase"/>
</dbReference>
<dbReference type="InterPro" id="IPR036851">
    <property type="entry name" value="Chloroperoxidase-like_sf"/>
</dbReference>
<dbReference type="PANTHER" id="PTHR33577:SF16">
    <property type="entry name" value="HEME HALOPEROXIDASE FAMILY PROFILE DOMAIN-CONTAINING PROTEIN"/>
    <property type="match status" value="1"/>
</dbReference>
<dbReference type="PANTHER" id="PTHR33577">
    <property type="entry name" value="STERIGMATOCYSTIN BIOSYNTHESIS PEROXIDASE STCC-RELATED"/>
    <property type="match status" value="1"/>
</dbReference>
<dbReference type="Pfam" id="PF01328">
    <property type="entry name" value="Peroxidase_2"/>
    <property type="match status" value="1"/>
</dbReference>
<dbReference type="SUPFAM" id="SSF47571">
    <property type="entry name" value="Cloroperoxidase"/>
    <property type="match status" value="1"/>
</dbReference>
<dbReference type="PROSITE" id="PS51405">
    <property type="entry name" value="HEME_HALOPEROXIDASE"/>
    <property type="match status" value="1"/>
</dbReference>
<organism>
    <name type="scientific">Coprinellus radians</name>
    <name type="common">Coprophilous mushroom</name>
    <name type="synonym">Coprinus radians</name>
    <dbReference type="NCBI Taxonomy" id="71721"/>
    <lineage>
        <taxon>Eukaryota</taxon>
        <taxon>Fungi</taxon>
        <taxon>Dikarya</taxon>
        <taxon>Basidiomycota</taxon>
        <taxon>Agaricomycotina</taxon>
        <taxon>Agaricomycetes</taxon>
        <taxon>Agaricomycetidae</taxon>
        <taxon>Agaricales</taxon>
        <taxon>Agaricineae</taxon>
        <taxon>Psathyrellaceae</taxon>
        <taxon>Coprinellus</taxon>
    </lineage>
</organism>
<protein>
    <recommendedName>
        <fullName evidence="7">Aromatic peroxygenase</fullName>
    </recommendedName>
</protein>
<evidence type="ECO:0000250" key="1">
    <source>
        <dbReference type="UniProtKB" id="P04963"/>
    </source>
</evidence>
<evidence type="ECO:0000255" key="2"/>
<evidence type="ECO:0000269" key="3">
    <source>
    </source>
</evidence>
<evidence type="ECO:0000269" key="4">
    <source>
    </source>
</evidence>
<evidence type="ECO:0000303" key="5">
    <source>
    </source>
</evidence>
<evidence type="ECO:0000305" key="6"/>
<evidence type="ECO:0000312" key="7">
    <source>
        <dbReference type="EMBL" id="CAS12255.1"/>
    </source>
</evidence>
<proteinExistence type="evidence at protein level"/>